<protein>
    <recommendedName>
        <fullName evidence="1">Aminomethyltransferase</fullName>
        <ecNumber evidence="1">2.1.2.10</ecNumber>
    </recommendedName>
    <alternativeName>
        <fullName evidence="1">Glycine cleavage system T protein</fullName>
    </alternativeName>
</protein>
<name>GCST_SHIDS</name>
<accession>Q32BW7</accession>
<organism>
    <name type="scientific">Shigella dysenteriae serotype 1 (strain Sd197)</name>
    <dbReference type="NCBI Taxonomy" id="300267"/>
    <lineage>
        <taxon>Bacteria</taxon>
        <taxon>Pseudomonadati</taxon>
        <taxon>Pseudomonadota</taxon>
        <taxon>Gammaproteobacteria</taxon>
        <taxon>Enterobacterales</taxon>
        <taxon>Enterobacteriaceae</taxon>
        <taxon>Shigella</taxon>
    </lineage>
</organism>
<gene>
    <name evidence="1" type="primary">gcvT</name>
    <name type="ordered locus">SDY_3176</name>
</gene>
<comment type="function">
    <text evidence="1">The glycine cleavage system catalyzes the degradation of glycine.</text>
</comment>
<comment type="catalytic activity">
    <reaction evidence="1">
        <text>N(6)-[(R)-S(8)-aminomethyldihydrolipoyl]-L-lysyl-[protein] + (6S)-5,6,7,8-tetrahydrofolate = N(6)-[(R)-dihydrolipoyl]-L-lysyl-[protein] + (6R)-5,10-methylene-5,6,7,8-tetrahydrofolate + NH4(+)</text>
        <dbReference type="Rhea" id="RHEA:16945"/>
        <dbReference type="Rhea" id="RHEA-COMP:10475"/>
        <dbReference type="Rhea" id="RHEA-COMP:10492"/>
        <dbReference type="ChEBI" id="CHEBI:15636"/>
        <dbReference type="ChEBI" id="CHEBI:28938"/>
        <dbReference type="ChEBI" id="CHEBI:57453"/>
        <dbReference type="ChEBI" id="CHEBI:83100"/>
        <dbReference type="ChEBI" id="CHEBI:83143"/>
        <dbReference type="EC" id="2.1.2.10"/>
    </reaction>
</comment>
<comment type="subunit">
    <text evidence="1">The glycine cleavage system is composed of four proteins: P, T, L and H.</text>
</comment>
<comment type="similarity">
    <text evidence="1">Belongs to the GcvT family.</text>
</comment>
<proteinExistence type="inferred from homology"/>
<keyword id="KW-0032">Aminotransferase</keyword>
<keyword id="KW-1185">Reference proteome</keyword>
<keyword id="KW-0808">Transferase</keyword>
<reference key="1">
    <citation type="journal article" date="2005" name="Nucleic Acids Res.">
        <title>Genome dynamics and diversity of Shigella species, the etiologic agents of bacillary dysentery.</title>
        <authorList>
            <person name="Yang F."/>
            <person name="Yang J."/>
            <person name="Zhang X."/>
            <person name="Chen L."/>
            <person name="Jiang Y."/>
            <person name="Yan Y."/>
            <person name="Tang X."/>
            <person name="Wang J."/>
            <person name="Xiong Z."/>
            <person name="Dong J."/>
            <person name="Xue Y."/>
            <person name="Zhu Y."/>
            <person name="Xu X."/>
            <person name="Sun L."/>
            <person name="Chen S."/>
            <person name="Nie H."/>
            <person name="Peng J."/>
            <person name="Xu J."/>
            <person name="Wang Y."/>
            <person name="Yuan Z."/>
            <person name="Wen Y."/>
            <person name="Yao Z."/>
            <person name="Shen Y."/>
            <person name="Qiang B."/>
            <person name="Hou Y."/>
            <person name="Yu J."/>
            <person name="Jin Q."/>
        </authorList>
    </citation>
    <scope>NUCLEOTIDE SEQUENCE [LARGE SCALE GENOMIC DNA]</scope>
    <source>
        <strain>Sd197</strain>
    </source>
</reference>
<evidence type="ECO:0000255" key="1">
    <source>
        <dbReference type="HAMAP-Rule" id="MF_00259"/>
    </source>
</evidence>
<feature type="chain" id="PRO_1000047709" description="Aminomethyltransferase">
    <location>
        <begin position="1"/>
        <end position="364"/>
    </location>
</feature>
<dbReference type="EC" id="2.1.2.10" evidence="1"/>
<dbReference type="EMBL" id="CP000034">
    <property type="protein sequence ID" value="ABB63188.1"/>
    <property type="molecule type" value="Genomic_DNA"/>
</dbReference>
<dbReference type="RefSeq" id="WP_000068707.1">
    <property type="nucleotide sequence ID" value="NC_007606.1"/>
</dbReference>
<dbReference type="RefSeq" id="YP_404679.1">
    <property type="nucleotide sequence ID" value="NC_007606.1"/>
</dbReference>
<dbReference type="SMR" id="Q32BW7"/>
<dbReference type="STRING" id="300267.SDY_3176"/>
<dbReference type="EnsemblBacteria" id="ABB63188">
    <property type="protein sequence ID" value="ABB63188"/>
    <property type="gene ID" value="SDY_3176"/>
</dbReference>
<dbReference type="KEGG" id="sdy:SDY_3176"/>
<dbReference type="PATRIC" id="fig|300267.13.peg.3794"/>
<dbReference type="HOGENOM" id="CLU_007884_10_2_6"/>
<dbReference type="Proteomes" id="UP000002716">
    <property type="component" value="Chromosome"/>
</dbReference>
<dbReference type="GO" id="GO:0005829">
    <property type="term" value="C:cytosol"/>
    <property type="evidence" value="ECO:0007669"/>
    <property type="project" value="TreeGrafter"/>
</dbReference>
<dbReference type="GO" id="GO:0005960">
    <property type="term" value="C:glycine cleavage complex"/>
    <property type="evidence" value="ECO:0007669"/>
    <property type="project" value="InterPro"/>
</dbReference>
<dbReference type="GO" id="GO:0004047">
    <property type="term" value="F:aminomethyltransferase activity"/>
    <property type="evidence" value="ECO:0007669"/>
    <property type="project" value="UniProtKB-UniRule"/>
</dbReference>
<dbReference type="GO" id="GO:0008483">
    <property type="term" value="F:transaminase activity"/>
    <property type="evidence" value="ECO:0007669"/>
    <property type="project" value="UniProtKB-KW"/>
</dbReference>
<dbReference type="GO" id="GO:0019464">
    <property type="term" value="P:glycine decarboxylation via glycine cleavage system"/>
    <property type="evidence" value="ECO:0007669"/>
    <property type="project" value="UniProtKB-UniRule"/>
</dbReference>
<dbReference type="FunFam" id="2.40.30.110:FF:000001">
    <property type="entry name" value="Aminomethyltransferase"/>
    <property type="match status" value="1"/>
</dbReference>
<dbReference type="FunFam" id="3.30.70.1400:FF:000001">
    <property type="entry name" value="Aminomethyltransferase"/>
    <property type="match status" value="1"/>
</dbReference>
<dbReference type="FunFam" id="4.10.1250.10:FF:000001">
    <property type="entry name" value="Aminomethyltransferase"/>
    <property type="match status" value="1"/>
</dbReference>
<dbReference type="Gene3D" id="2.40.30.110">
    <property type="entry name" value="Aminomethyltransferase beta-barrel domains"/>
    <property type="match status" value="1"/>
</dbReference>
<dbReference type="Gene3D" id="3.30.70.1400">
    <property type="entry name" value="Aminomethyltransferase beta-barrel domains"/>
    <property type="match status" value="1"/>
</dbReference>
<dbReference type="Gene3D" id="4.10.1250.10">
    <property type="entry name" value="Aminomethyltransferase fragment"/>
    <property type="match status" value="1"/>
</dbReference>
<dbReference type="Gene3D" id="3.30.1360.120">
    <property type="entry name" value="Probable tRNA modification gtpase trme, domain 1"/>
    <property type="match status" value="1"/>
</dbReference>
<dbReference type="HAMAP" id="MF_00259">
    <property type="entry name" value="GcvT"/>
    <property type="match status" value="1"/>
</dbReference>
<dbReference type="InterPro" id="IPR006223">
    <property type="entry name" value="GCS_T"/>
</dbReference>
<dbReference type="InterPro" id="IPR022903">
    <property type="entry name" value="GCS_T_bac"/>
</dbReference>
<dbReference type="InterPro" id="IPR013977">
    <property type="entry name" value="GCST_C"/>
</dbReference>
<dbReference type="InterPro" id="IPR006222">
    <property type="entry name" value="GCV_T_N"/>
</dbReference>
<dbReference type="InterPro" id="IPR028896">
    <property type="entry name" value="GcvT/YgfZ/DmdA"/>
</dbReference>
<dbReference type="InterPro" id="IPR029043">
    <property type="entry name" value="GcvT/YgfZ_C"/>
</dbReference>
<dbReference type="InterPro" id="IPR027266">
    <property type="entry name" value="TrmE/GcvT_dom1"/>
</dbReference>
<dbReference type="NCBIfam" id="TIGR00528">
    <property type="entry name" value="gcvT"/>
    <property type="match status" value="1"/>
</dbReference>
<dbReference type="NCBIfam" id="NF001567">
    <property type="entry name" value="PRK00389.1"/>
    <property type="match status" value="1"/>
</dbReference>
<dbReference type="PANTHER" id="PTHR43757">
    <property type="entry name" value="AMINOMETHYLTRANSFERASE"/>
    <property type="match status" value="1"/>
</dbReference>
<dbReference type="PANTHER" id="PTHR43757:SF2">
    <property type="entry name" value="AMINOMETHYLTRANSFERASE, MITOCHONDRIAL"/>
    <property type="match status" value="1"/>
</dbReference>
<dbReference type="Pfam" id="PF01571">
    <property type="entry name" value="GCV_T"/>
    <property type="match status" value="1"/>
</dbReference>
<dbReference type="Pfam" id="PF08669">
    <property type="entry name" value="GCV_T_C"/>
    <property type="match status" value="1"/>
</dbReference>
<dbReference type="PIRSF" id="PIRSF006487">
    <property type="entry name" value="GcvT"/>
    <property type="match status" value="1"/>
</dbReference>
<dbReference type="SUPFAM" id="SSF101790">
    <property type="entry name" value="Aminomethyltransferase beta-barrel domain"/>
    <property type="match status" value="1"/>
</dbReference>
<dbReference type="SUPFAM" id="SSF103025">
    <property type="entry name" value="Folate-binding domain"/>
    <property type="match status" value="1"/>
</dbReference>
<sequence>MAQQTPLYEQHTLCGARMVDFHGWMMPLHYGSQIDEHHAVRTDAGMFDVSHMTIVDLRGSRTREFLRYLLANDVAKLTKSGKALYSGMLNASGGVIDDLIVYYFTEDFFRLVVNSATREKDLSWITQHAEPFGIEITVRDDLSMIAVQGPNAQAKAATLFNDAQRQAVEGMKPFFGVQAGDLFIATTGYTGEAGYEIALPNEKAADFWRALVEAGVKPCGLGARDTLRLEAGMNLYSQEMDETISPLAANMGWTIAWEPADRDFIGREALEAQREHGTEKLVGLVMTEKGVLRNELPVRFTDVQGNQHEGIITSGTFSPTLGYSIALARVPEGIGETAIVQIRNREMPVKVTKPVFVRNGKAVA</sequence>